<protein>
    <recommendedName>
        <fullName evidence="1">DNA ligase</fullName>
        <ecNumber evidence="1">6.5.1.2</ecNumber>
    </recommendedName>
    <alternativeName>
        <fullName evidence="1">Polydeoxyribonucleotide synthase [NAD(+)]</fullName>
    </alternativeName>
</protein>
<keyword id="KW-0227">DNA damage</keyword>
<keyword id="KW-0234">DNA repair</keyword>
<keyword id="KW-0235">DNA replication</keyword>
<keyword id="KW-0436">Ligase</keyword>
<keyword id="KW-0460">Magnesium</keyword>
<keyword id="KW-0464">Manganese</keyword>
<keyword id="KW-0479">Metal-binding</keyword>
<keyword id="KW-0520">NAD</keyword>
<keyword id="KW-0862">Zinc</keyword>
<accession>Q5WXV3</accession>
<dbReference type="EC" id="6.5.1.2" evidence="1"/>
<dbReference type="EMBL" id="CR628337">
    <property type="protein sequence ID" value="CAH15221.1"/>
    <property type="molecule type" value="Genomic_DNA"/>
</dbReference>
<dbReference type="RefSeq" id="WP_011215120.1">
    <property type="nucleotide sequence ID" value="NC_006369.1"/>
</dbReference>
<dbReference type="SMR" id="Q5WXV3"/>
<dbReference type="KEGG" id="lpf:lpl0987"/>
<dbReference type="LegioList" id="lpl0987"/>
<dbReference type="HOGENOM" id="CLU_007764_2_1_6"/>
<dbReference type="Proteomes" id="UP000002517">
    <property type="component" value="Chromosome"/>
</dbReference>
<dbReference type="GO" id="GO:0005829">
    <property type="term" value="C:cytosol"/>
    <property type="evidence" value="ECO:0007669"/>
    <property type="project" value="TreeGrafter"/>
</dbReference>
<dbReference type="GO" id="GO:0003677">
    <property type="term" value="F:DNA binding"/>
    <property type="evidence" value="ECO:0007669"/>
    <property type="project" value="InterPro"/>
</dbReference>
<dbReference type="GO" id="GO:0003911">
    <property type="term" value="F:DNA ligase (NAD+) activity"/>
    <property type="evidence" value="ECO:0007669"/>
    <property type="project" value="UniProtKB-UniRule"/>
</dbReference>
<dbReference type="GO" id="GO:0046872">
    <property type="term" value="F:metal ion binding"/>
    <property type="evidence" value="ECO:0007669"/>
    <property type="project" value="UniProtKB-KW"/>
</dbReference>
<dbReference type="GO" id="GO:0006281">
    <property type="term" value="P:DNA repair"/>
    <property type="evidence" value="ECO:0007669"/>
    <property type="project" value="UniProtKB-KW"/>
</dbReference>
<dbReference type="GO" id="GO:0006260">
    <property type="term" value="P:DNA replication"/>
    <property type="evidence" value="ECO:0007669"/>
    <property type="project" value="UniProtKB-KW"/>
</dbReference>
<dbReference type="CDD" id="cd17748">
    <property type="entry name" value="BRCT_DNA_ligase_like"/>
    <property type="match status" value="1"/>
</dbReference>
<dbReference type="CDD" id="cd00114">
    <property type="entry name" value="LIGANc"/>
    <property type="match status" value="1"/>
</dbReference>
<dbReference type="FunFam" id="1.10.150.20:FF:000006">
    <property type="entry name" value="DNA ligase"/>
    <property type="match status" value="1"/>
</dbReference>
<dbReference type="FunFam" id="1.10.150.20:FF:000007">
    <property type="entry name" value="DNA ligase"/>
    <property type="match status" value="1"/>
</dbReference>
<dbReference type="FunFam" id="2.40.50.140:FF:000012">
    <property type="entry name" value="DNA ligase"/>
    <property type="match status" value="1"/>
</dbReference>
<dbReference type="FunFam" id="3.30.470.30:FF:000001">
    <property type="entry name" value="DNA ligase"/>
    <property type="match status" value="1"/>
</dbReference>
<dbReference type="Gene3D" id="6.20.10.30">
    <property type="match status" value="1"/>
</dbReference>
<dbReference type="Gene3D" id="1.10.150.20">
    <property type="entry name" value="5' to 3' exonuclease, C-terminal subdomain"/>
    <property type="match status" value="2"/>
</dbReference>
<dbReference type="Gene3D" id="3.40.50.10190">
    <property type="entry name" value="BRCT domain"/>
    <property type="match status" value="1"/>
</dbReference>
<dbReference type="Gene3D" id="3.30.470.30">
    <property type="entry name" value="DNA ligase/mRNA capping enzyme"/>
    <property type="match status" value="1"/>
</dbReference>
<dbReference type="Gene3D" id="1.10.287.610">
    <property type="entry name" value="Helix hairpin bin"/>
    <property type="match status" value="1"/>
</dbReference>
<dbReference type="Gene3D" id="2.40.50.140">
    <property type="entry name" value="Nucleic acid-binding proteins"/>
    <property type="match status" value="1"/>
</dbReference>
<dbReference type="HAMAP" id="MF_01588">
    <property type="entry name" value="DNA_ligase_A"/>
    <property type="match status" value="1"/>
</dbReference>
<dbReference type="InterPro" id="IPR001357">
    <property type="entry name" value="BRCT_dom"/>
</dbReference>
<dbReference type="InterPro" id="IPR036420">
    <property type="entry name" value="BRCT_dom_sf"/>
</dbReference>
<dbReference type="InterPro" id="IPR041663">
    <property type="entry name" value="DisA/LigA_HHH"/>
</dbReference>
<dbReference type="InterPro" id="IPR001679">
    <property type="entry name" value="DNA_ligase"/>
</dbReference>
<dbReference type="InterPro" id="IPR018239">
    <property type="entry name" value="DNA_ligase_AS"/>
</dbReference>
<dbReference type="InterPro" id="IPR033136">
    <property type="entry name" value="DNA_ligase_CS"/>
</dbReference>
<dbReference type="InterPro" id="IPR013839">
    <property type="entry name" value="DNAligase_adenylation"/>
</dbReference>
<dbReference type="InterPro" id="IPR013840">
    <property type="entry name" value="DNAligase_N"/>
</dbReference>
<dbReference type="InterPro" id="IPR003583">
    <property type="entry name" value="Hlx-hairpin-Hlx_DNA-bd_motif"/>
</dbReference>
<dbReference type="InterPro" id="IPR012340">
    <property type="entry name" value="NA-bd_OB-fold"/>
</dbReference>
<dbReference type="InterPro" id="IPR004150">
    <property type="entry name" value="NAD_DNA_ligase_OB"/>
</dbReference>
<dbReference type="InterPro" id="IPR010994">
    <property type="entry name" value="RuvA_2-like"/>
</dbReference>
<dbReference type="InterPro" id="IPR004149">
    <property type="entry name" value="Znf_DNAligase_C4"/>
</dbReference>
<dbReference type="NCBIfam" id="TIGR00575">
    <property type="entry name" value="dnlj"/>
    <property type="match status" value="1"/>
</dbReference>
<dbReference type="NCBIfam" id="NF005932">
    <property type="entry name" value="PRK07956.1"/>
    <property type="match status" value="1"/>
</dbReference>
<dbReference type="PANTHER" id="PTHR23389">
    <property type="entry name" value="CHROMOSOME TRANSMISSION FIDELITY FACTOR 18"/>
    <property type="match status" value="1"/>
</dbReference>
<dbReference type="PANTHER" id="PTHR23389:SF9">
    <property type="entry name" value="DNA LIGASE"/>
    <property type="match status" value="1"/>
</dbReference>
<dbReference type="Pfam" id="PF00533">
    <property type="entry name" value="BRCT"/>
    <property type="match status" value="1"/>
</dbReference>
<dbReference type="Pfam" id="PF01653">
    <property type="entry name" value="DNA_ligase_aden"/>
    <property type="match status" value="1"/>
</dbReference>
<dbReference type="Pfam" id="PF03120">
    <property type="entry name" value="DNA_ligase_OB"/>
    <property type="match status" value="1"/>
</dbReference>
<dbReference type="Pfam" id="PF03119">
    <property type="entry name" value="DNA_ligase_ZBD"/>
    <property type="match status" value="1"/>
</dbReference>
<dbReference type="Pfam" id="PF12826">
    <property type="entry name" value="HHH_2"/>
    <property type="match status" value="1"/>
</dbReference>
<dbReference type="Pfam" id="PF14520">
    <property type="entry name" value="HHH_5"/>
    <property type="match status" value="1"/>
</dbReference>
<dbReference type="Pfam" id="PF22745">
    <property type="entry name" value="Nlig-Ia"/>
    <property type="match status" value="1"/>
</dbReference>
<dbReference type="PIRSF" id="PIRSF001604">
    <property type="entry name" value="LigA"/>
    <property type="match status" value="1"/>
</dbReference>
<dbReference type="SMART" id="SM00292">
    <property type="entry name" value="BRCT"/>
    <property type="match status" value="1"/>
</dbReference>
<dbReference type="SMART" id="SM00278">
    <property type="entry name" value="HhH1"/>
    <property type="match status" value="4"/>
</dbReference>
<dbReference type="SMART" id="SM00532">
    <property type="entry name" value="LIGANc"/>
    <property type="match status" value="1"/>
</dbReference>
<dbReference type="SUPFAM" id="SSF52113">
    <property type="entry name" value="BRCT domain"/>
    <property type="match status" value="1"/>
</dbReference>
<dbReference type="SUPFAM" id="SSF56091">
    <property type="entry name" value="DNA ligase/mRNA capping enzyme, catalytic domain"/>
    <property type="match status" value="1"/>
</dbReference>
<dbReference type="SUPFAM" id="SSF50249">
    <property type="entry name" value="Nucleic acid-binding proteins"/>
    <property type="match status" value="1"/>
</dbReference>
<dbReference type="SUPFAM" id="SSF47781">
    <property type="entry name" value="RuvA domain 2-like"/>
    <property type="match status" value="1"/>
</dbReference>
<dbReference type="PROSITE" id="PS50172">
    <property type="entry name" value="BRCT"/>
    <property type="match status" value="1"/>
</dbReference>
<dbReference type="PROSITE" id="PS01055">
    <property type="entry name" value="DNA_LIGASE_N1"/>
    <property type="match status" value="1"/>
</dbReference>
<dbReference type="PROSITE" id="PS01056">
    <property type="entry name" value="DNA_LIGASE_N2"/>
    <property type="match status" value="1"/>
</dbReference>
<organism>
    <name type="scientific">Legionella pneumophila (strain Lens)</name>
    <dbReference type="NCBI Taxonomy" id="297245"/>
    <lineage>
        <taxon>Bacteria</taxon>
        <taxon>Pseudomonadati</taxon>
        <taxon>Pseudomonadota</taxon>
        <taxon>Gammaproteobacteria</taxon>
        <taxon>Legionellales</taxon>
        <taxon>Legionellaceae</taxon>
        <taxon>Legionella</taxon>
    </lineage>
</organism>
<proteinExistence type="inferred from homology"/>
<sequence length="673" mass="74582">MNDQGIKESIETLKEQIRKYDYHYYVLDEPLVPDAEYDRCFKALQQYEEQYPQFLSPDSPTQRVSGTPSDAFMPVAHKQPMLSLSNVFTTDELKAFIKRAIEKLDEPNQQLVFACEPKLDGLAVNMTYEGGILTHAATRGDGAVGENITANIKTIASVPLRLRVSNPPKLIEVRGEVYIPKADFEAYNARARELGEKTFANPRNAAAGSLRQLNPEISASRPLAIYCYGIGACEDYKLPNSHLEQLNLLKEFGFRVSPETRRAVGIEGCLDYYQYMLAKRNQLPFEIDGVVYKIDSISLQQQLGYVSRAPRFACAHKFPATEEMTRLIAVDFQVGRTGAVTPVARLEPVSVGGVTVSNATLHNFDEITRKDIRIGDTVIIRRAGDVIPEVVSVILEKRPANARMIELPKNCPVCGSEVVREADEAIARCVGGLYCKAQLKRMMWHFASRKAMYIEGLGSVLIDQLVDEGIVHHLADLYELDLQTLASLPRMGEKSAKNLLSALEKSKKTTFNRFLYALGIREIGEAGARVLAEHYCDVEGLKAATIEELMTLNDIGPVAASHVVHFFAQAHNLEVIDRLLELGIHWPKSEKIQVNQQNPFFGKTVVLTGTLSTMGREEAKAKLLALGAKVSGSVSSKTDYVVAGSEAGSKLIKATELGVAIIEEDEFLKWVNS</sequence>
<gene>
    <name evidence="1" type="primary">ligA</name>
    <name type="ordered locus">lpl0987</name>
</gene>
<feature type="chain" id="PRO_0000313286" description="DNA ligase">
    <location>
        <begin position="1"/>
        <end position="673"/>
    </location>
</feature>
<feature type="domain" description="BRCT" evidence="1">
    <location>
        <begin position="595"/>
        <end position="673"/>
    </location>
</feature>
<feature type="active site" description="N6-AMP-lysine intermediate" evidence="1">
    <location>
        <position position="118"/>
    </location>
</feature>
<feature type="binding site" evidence="1">
    <location>
        <begin position="34"/>
        <end position="38"/>
    </location>
    <ligand>
        <name>NAD(+)</name>
        <dbReference type="ChEBI" id="CHEBI:57540"/>
    </ligand>
</feature>
<feature type="binding site" evidence="1">
    <location>
        <begin position="83"/>
        <end position="84"/>
    </location>
    <ligand>
        <name>NAD(+)</name>
        <dbReference type="ChEBI" id="CHEBI:57540"/>
    </ligand>
</feature>
<feature type="binding site" evidence="1">
    <location>
        <position position="116"/>
    </location>
    <ligand>
        <name>NAD(+)</name>
        <dbReference type="ChEBI" id="CHEBI:57540"/>
    </ligand>
</feature>
<feature type="binding site" evidence="1">
    <location>
        <position position="139"/>
    </location>
    <ligand>
        <name>NAD(+)</name>
        <dbReference type="ChEBI" id="CHEBI:57540"/>
    </ligand>
</feature>
<feature type="binding site" evidence="1">
    <location>
        <position position="176"/>
    </location>
    <ligand>
        <name>NAD(+)</name>
        <dbReference type="ChEBI" id="CHEBI:57540"/>
    </ligand>
</feature>
<feature type="binding site" evidence="1">
    <location>
        <position position="293"/>
    </location>
    <ligand>
        <name>NAD(+)</name>
        <dbReference type="ChEBI" id="CHEBI:57540"/>
    </ligand>
</feature>
<feature type="binding site" evidence="1">
    <location>
        <position position="317"/>
    </location>
    <ligand>
        <name>NAD(+)</name>
        <dbReference type="ChEBI" id="CHEBI:57540"/>
    </ligand>
</feature>
<feature type="binding site" evidence="1">
    <location>
        <position position="411"/>
    </location>
    <ligand>
        <name>Zn(2+)</name>
        <dbReference type="ChEBI" id="CHEBI:29105"/>
    </ligand>
</feature>
<feature type="binding site" evidence="1">
    <location>
        <position position="414"/>
    </location>
    <ligand>
        <name>Zn(2+)</name>
        <dbReference type="ChEBI" id="CHEBI:29105"/>
    </ligand>
</feature>
<feature type="binding site" evidence="1">
    <location>
        <position position="429"/>
    </location>
    <ligand>
        <name>Zn(2+)</name>
        <dbReference type="ChEBI" id="CHEBI:29105"/>
    </ligand>
</feature>
<feature type="binding site" evidence="1">
    <location>
        <position position="435"/>
    </location>
    <ligand>
        <name>Zn(2+)</name>
        <dbReference type="ChEBI" id="CHEBI:29105"/>
    </ligand>
</feature>
<reference key="1">
    <citation type="journal article" date="2004" name="Nat. Genet.">
        <title>Evidence in the Legionella pneumophila genome for exploitation of host cell functions and high genome plasticity.</title>
        <authorList>
            <person name="Cazalet C."/>
            <person name="Rusniok C."/>
            <person name="Brueggemann H."/>
            <person name="Zidane N."/>
            <person name="Magnier A."/>
            <person name="Ma L."/>
            <person name="Tichit M."/>
            <person name="Jarraud S."/>
            <person name="Bouchier C."/>
            <person name="Vandenesch F."/>
            <person name="Kunst F."/>
            <person name="Etienne J."/>
            <person name="Glaser P."/>
            <person name="Buchrieser C."/>
        </authorList>
    </citation>
    <scope>NUCLEOTIDE SEQUENCE [LARGE SCALE GENOMIC DNA]</scope>
    <source>
        <strain>Lens</strain>
    </source>
</reference>
<name>DNLJ_LEGPL</name>
<evidence type="ECO:0000255" key="1">
    <source>
        <dbReference type="HAMAP-Rule" id="MF_01588"/>
    </source>
</evidence>
<comment type="function">
    <text evidence="1">DNA ligase that catalyzes the formation of phosphodiester linkages between 5'-phosphoryl and 3'-hydroxyl groups in double-stranded DNA using NAD as a coenzyme and as the energy source for the reaction. It is essential for DNA replication and repair of damaged DNA.</text>
</comment>
<comment type="catalytic activity">
    <reaction evidence="1">
        <text>NAD(+) + (deoxyribonucleotide)n-3'-hydroxyl + 5'-phospho-(deoxyribonucleotide)m = (deoxyribonucleotide)n+m + AMP + beta-nicotinamide D-nucleotide.</text>
        <dbReference type="EC" id="6.5.1.2"/>
    </reaction>
</comment>
<comment type="cofactor">
    <cofactor evidence="1">
        <name>Mg(2+)</name>
        <dbReference type="ChEBI" id="CHEBI:18420"/>
    </cofactor>
    <cofactor evidence="1">
        <name>Mn(2+)</name>
        <dbReference type="ChEBI" id="CHEBI:29035"/>
    </cofactor>
</comment>
<comment type="similarity">
    <text evidence="1">Belongs to the NAD-dependent DNA ligase family. LigA subfamily.</text>
</comment>